<name>LTOR4_DROME</name>
<gene>
    <name evidence="5 7" type="primary">Lamtor4</name>
    <name evidence="7" type="ORF">CG14977</name>
</gene>
<reference key="1">
    <citation type="journal article" date="2000" name="Science">
        <title>The genome sequence of Drosophila melanogaster.</title>
        <authorList>
            <person name="Adams M.D."/>
            <person name="Celniker S.E."/>
            <person name="Holt R.A."/>
            <person name="Evans C.A."/>
            <person name="Gocayne J.D."/>
            <person name="Amanatides P.G."/>
            <person name="Scherer S.E."/>
            <person name="Li P.W."/>
            <person name="Hoskins R.A."/>
            <person name="Galle R.F."/>
            <person name="George R.A."/>
            <person name="Lewis S.E."/>
            <person name="Richards S."/>
            <person name="Ashburner M."/>
            <person name="Henderson S.N."/>
            <person name="Sutton G.G."/>
            <person name="Wortman J.R."/>
            <person name="Yandell M.D."/>
            <person name="Zhang Q."/>
            <person name="Chen L.X."/>
            <person name="Brandon R.C."/>
            <person name="Rogers Y.-H.C."/>
            <person name="Blazej R.G."/>
            <person name="Champe M."/>
            <person name="Pfeiffer B.D."/>
            <person name="Wan K.H."/>
            <person name="Doyle C."/>
            <person name="Baxter E.G."/>
            <person name="Helt G."/>
            <person name="Nelson C.R."/>
            <person name="Miklos G.L.G."/>
            <person name="Abril J.F."/>
            <person name="Agbayani A."/>
            <person name="An H.-J."/>
            <person name="Andrews-Pfannkoch C."/>
            <person name="Baldwin D."/>
            <person name="Ballew R.M."/>
            <person name="Basu A."/>
            <person name="Baxendale J."/>
            <person name="Bayraktaroglu L."/>
            <person name="Beasley E.M."/>
            <person name="Beeson K.Y."/>
            <person name="Benos P.V."/>
            <person name="Berman B.P."/>
            <person name="Bhandari D."/>
            <person name="Bolshakov S."/>
            <person name="Borkova D."/>
            <person name="Botchan M.R."/>
            <person name="Bouck J."/>
            <person name="Brokstein P."/>
            <person name="Brottier P."/>
            <person name="Burtis K.C."/>
            <person name="Busam D.A."/>
            <person name="Butler H."/>
            <person name="Cadieu E."/>
            <person name="Center A."/>
            <person name="Chandra I."/>
            <person name="Cherry J.M."/>
            <person name="Cawley S."/>
            <person name="Dahlke C."/>
            <person name="Davenport L.B."/>
            <person name="Davies P."/>
            <person name="de Pablos B."/>
            <person name="Delcher A."/>
            <person name="Deng Z."/>
            <person name="Mays A.D."/>
            <person name="Dew I."/>
            <person name="Dietz S.M."/>
            <person name="Dodson K."/>
            <person name="Doup L.E."/>
            <person name="Downes M."/>
            <person name="Dugan-Rocha S."/>
            <person name="Dunkov B.C."/>
            <person name="Dunn P."/>
            <person name="Durbin K.J."/>
            <person name="Evangelista C.C."/>
            <person name="Ferraz C."/>
            <person name="Ferriera S."/>
            <person name="Fleischmann W."/>
            <person name="Fosler C."/>
            <person name="Gabrielian A.E."/>
            <person name="Garg N.S."/>
            <person name="Gelbart W.M."/>
            <person name="Glasser K."/>
            <person name="Glodek A."/>
            <person name="Gong F."/>
            <person name="Gorrell J.H."/>
            <person name="Gu Z."/>
            <person name="Guan P."/>
            <person name="Harris M."/>
            <person name="Harris N.L."/>
            <person name="Harvey D.A."/>
            <person name="Heiman T.J."/>
            <person name="Hernandez J.R."/>
            <person name="Houck J."/>
            <person name="Hostin D."/>
            <person name="Houston K.A."/>
            <person name="Howland T.J."/>
            <person name="Wei M.-H."/>
            <person name="Ibegwam C."/>
            <person name="Jalali M."/>
            <person name="Kalush F."/>
            <person name="Karpen G.H."/>
            <person name="Ke Z."/>
            <person name="Kennison J.A."/>
            <person name="Ketchum K.A."/>
            <person name="Kimmel B.E."/>
            <person name="Kodira C.D."/>
            <person name="Kraft C.L."/>
            <person name="Kravitz S."/>
            <person name="Kulp D."/>
            <person name="Lai Z."/>
            <person name="Lasko P."/>
            <person name="Lei Y."/>
            <person name="Levitsky A.A."/>
            <person name="Li J.H."/>
            <person name="Li Z."/>
            <person name="Liang Y."/>
            <person name="Lin X."/>
            <person name="Liu X."/>
            <person name="Mattei B."/>
            <person name="McIntosh T.C."/>
            <person name="McLeod M.P."/>
            <person name="McPherson D."/>
            <person name="Merkulov G."/>
            <person name="Milshina N.V."/>
            <person name="Mobarry C."/>
            <person name="Morris J."/>
            <person name="Moshrefi A."/>
            <person name="Mount S.M."/>
            <person name="Moy M."/>
            <person name="Murphy B."/>
            <person name="Murphy L."/>
            <person name="Muzny D.M."/>
            <person name="Nelson D.L."/>
            <person name="Nelson D.R."/>
            <person name="Nelson K.A."/>
            <person name="Nixon K."/>
            <person name="Nusskern D.R."/>
            <person name="Pacleb J.M."/>
            <person name="Palazzolo M."/>
            <person name="Pittman G.S."/>
            <person name="Pan S."/>
            <person name="Pollard J."/>
            <person name="Puri V."/>
            <person name="Reese M.G."/>
            <person name="Reinert K."/>
            <person name="Remington K."/>
            <person name="Saunders R.D.C."/>
            <person name="Scheeler F."/>
            <person name="Shen H."/>
            <person name="Shue B.C."/>
            <person name="Siden-Kiamos I."/>
            <person name="Simpson M."/>
            <person name="Skupski M.P."/>
            <person name="Smith T.J."/>
            <person name="Spier E."/>
            <person name="Spradling A.C."/>
            <person name="Stapleton M."/>
            <person name="Strong R."/>
            <person name="Sun E."/>
            <person name="Svirskas R."/>
            <person name="Tector C."/>
            <person name="Turner R."/>
            <person name="Venter E."/>
            <person name="Wang A.H."/>
            <person name="Wang X."/>
            <person name="Wang Z.-Y."/>
            <person name="Wassarman D.A."/>
            <person name="Weinstock G.M."/>
            <person name="Weissenbach J."/>
            <person name="Williams S.M."/>
            <person name="Woodage T."/>
            <person name="Worley K.C."/>
            <person name="Wu D."/>
            <person name="Yang S."/>
            <person name="Yao Q.A."/>
            <person name="Ye J."/>
            <person name="Yeh R.-F."/>
            <person name="Zaveri J.S."/>
            <person name="Zhan M."/>
            <person name="Zhang G."/>
            <person name="Zhao Q."/>
            <person name="Zheng L."/>
            <person name="Zheng X.H."/>
            <person name="Zhong F.N."/>
            <person name="Zhong W."/>
            <person name="Zhou X."/>
            <person name="Zhu S.C."/>
            <person name="Zhu X."/>
            <person name="Smith H.O."/>
            <person name="Gibbs R.A."/>
            <person name="Myers E.W."/>
            <person name="Rubin G.M."/>
            <person name="Venter J.C."/>
        </authorList>
    </citation>
    <scope>NUCLEOTIDE SEQUENCE [LARGE SCALE GENOMIC DNA]</scope>
    <source>
        <strain>Berkeley</strain>
    </source>
</reference>
<reference key="2">
    <citation type="journal article" date="2002" name="Genome Biol.">
        <title>Annotation of the Drosophila melanogaster euchromatic genome: a systematic review.</title>
        <authorList>
            <person name="Misra S."/>
            <person name="Crosby M.A."/>
            <person name="Mungall C.J."/>
            <person name="Matthews B.B."/>
            <person name="Campbell K.S."/>
            <person name="Hradecky P."/>
            <person name="Huang Y."/>
            <person name="Kaminker J.S."/>
            <person name="Millburn G.H."/>
            <person name="Prochnik S.E."/>
            <person name="Smith C.D."/>
            <person name="Tupy J.L."/>
            <person name="Whitfield E.J."/>
            <person name="Bayraktaroglu L."/>
            <person name="Berman B.P."/>
            <person name="Bettencourt B.R."/>
            <person name="Celniker S.E."/>
            <person name="de Grey A.D.N.J."/>
            <person name="Drysdale R.A."/>
            <person name="Harris N.L."/>
            <person name="Richter J."/>
            <person name="Russo S."/>
            <person name="Schroeder A.J."/>
            <person name="Shu S.Q."/>
            <person name="Stapleton M."/>
            <person name="Yamada C."/>
            <person name="Ashburner M."/>
            <person name="Gelbart W.M."/>
            <person name="Rubin G.M."/>
            <person name="Lewis S.E."/>
        </authorList>
    </citation>
    <scope>GENOME REANNOTATION</scope>
    <source>
        <strain>Berkeley</strain>
    </source>
</reference>
<reference key="3">
    <citation type="journal article" date="2002" name="Genome Biol.">
        <title>A Drosophila full-length cDNA resource.</title>
        <authorList>
            <person name="Stapleton M."/>
            <person name="Carlson J.W."/>
            <person name="Brokstein P."/>
            <person name="Yu C."/>
            <person name="Champe M."/>
            <person name="George R.A."/>
            <person name="Guarin H."/>
            <person name="Kronmiller B."/>
            <person name="Pacleb J.M."/>
            <person name="Park S."/>
            <person name="Wan K.H."/>
            <person name="Rubin G.M."/>
            <person name="Celniker S.E."/>
        </authorList>
    </citation>
    <scope>NUCLEOTIDE SEQUENCE [LARGE SCALE MRNA]</scope>
    <source>
        <strain>Berkeley</strain>
        <tissue>Head</tissue>
    </source>
</reference>
<reference key="4">
    <citation type="submission" date="2008-05" db="EMBL/GenBank/DDBJ databases">
        <authorList>
            <person name="Carlson J.W."/>
            <person name="Booth B."/>
            <person name="Frise E."/>
            <person name="Park S."/>
            <person name="Wan K.H."/>
            <person name="Yu C."/>
            <person name="Celniker S.E."/>
        </authorList>
    </citation>
    <scope>NUCLEOTIDE SEQUENCE [LARGE SCALE MRNA]</scope>
    <source>
        <strain>Berkeley</strain>
        <tissue>Head</tissue>
    </source>
</reference>
<reference key="5">
    <citation type="journal article" date="2012" name="Cell">
        <title>Ragulator is a GEF for the Rag GTPases that signal amino acid levels to mTORC1.</title>
        <authorList>
            <person name="Bar-Peled L."/>
            <person name="Schweitzer L.D."/>
            <person name="Zoncu R."/>
            <person name="Sabatini D.M."/>
        </authorList>
    </citation>
    <scope>FUNCTION IN TOR PATHWAY</scope>
</reference>
<dbReference type="EMBL" id="AE014296">
    <property type="protein sequence ID" value="AAF47804.2"/>
    <property type="molecule type" value="Genomic_DNA"/>
</dbReference>
<dbReference type="EMBL" id="AY075542">
    <property type="protein sequence ID" value="AAL68349.1"/>
    <property type="molecule type" value="mRNA"/>
</dbReference>
<dbReference type="EMBL" id="BT032657">
    <property type="protein sequence ID" value="ACD81671.1"/>
    <property type="molecule type" value="mRNA"/>
</dbReference>
<dbReference type="RefSeq" id="NP_647834.3">
    <property type="nucleotide sequence ID" value="NM_139577.3"/>
</dbReference>
<dbReference type="SMR" id="Q9VZL6"/>
<dbReference type="BioGRID" id="63942">
    <property type="interactions" value="4"/>
</dbReference>
<dbReference type="ComplexPortal" id="CPX-2709">
    <property type="entry name" value="Ragulator complex"/>
</dbReference>
<dbReference type="FunCoup" id="Q9VZL6">
    <property type="interactions" value="725"/>
</dbReference>
<dbReference type="IntAct" id="Q9VZL6">
    <property type="interactions" value="3"/>
</dbReference>
<dbReference type="STRING" id="7227.FBpp0303128"/>
<dbReference type="PaxDb" id="7227-FBpp0073016"/>
<dbReference type="DNASU" id="38454"/>
<dbReference type="EnsemblMetazoa" id="FBtr0073158">
    <property type="protein sequence ID" value="FBpp0073016"/>
    <property type="gene ID" value="FBgn0035469"/>
</dbReference>
<dbReference type="GeneID" id="38454"/>
<dbReference type="KEGG" id="dme:Dmel_CG14977"/>
<dbReference type="UCSC" id="CG14977-RA">
    <property type="organism name" value="d. melanogaster"/>
</dbReference>
<dbReference type="AGR" id="FB:FBgn0035469"/>
<dbReference type="CTD" id="389541"/>
<dbReference type="FlyBase" id="FBgn0035469">
    <property type="gene designation" value="Lamtor4"/>
</dbReference>
<dbReference type="VEuPathDB" id="VectorBase:FBgn0035469"/>
<dbReference type="eggNOG" id="ENOG502S3B2">
    <property type="taxonomic scope" value="Eukaryota"/>
</dbReference>
<dbReference type="GeneTree" id="ENSGT00390000016053"/>
<dbReference type="HOGENOM" id="CLU_137556_0_0_1"/>
<dbReference type="InParanoid" id="Q9VZL6"/>
<dbReference type="OMA" id="KTHNGAN"/>
<dbReference type="OrthoDB" id="275011at2759"/>
<dbReference type="PhylomeDB" id="Q9VZL6"/>
<dbReference type="Reactome" id="R-DME-1632852">
    <property type="pathway name" value="Macroautophagy"/>
</dbReference>
<dbReference type="Reactome" id="R-DME-165159">
    <property type="pathway name" value="MTOR signalling"/>
</dbReference>
<dbReference type="Reactome" id="R-DME-166208">
    <property type="pathway name" value="mTORC1-mediated signalling"/>
</dbReference>
<dbReference type="Reactome" id="R-DME-380972">
    <property type="pathway name" value="Energy dependent regulation of mTOR by LKB1-AMPK"/>
</dbReference>
<dbReference type="Reactome" id="R-DME-5628897">
    <property type="pathway name" value="TP53 Regulates Metabolic Genes"/>
</dbReference>
<dbReference type="Reactome" id="R-DME-8943724">
    <property type="pathway name" value="Regulation of PTEN gene transcription"/>
</dbReference>
<dbReference type="Reactome" id="R-DME-9639288">
    <property type="pathway name" value="Amino acids regulate mTORC1"/>
</dbReference>
<dbReference type="BioGRID-ORCS" id="38454">
    <property type="hits" value="0 hits in 1 CRISPR screen"/>
</dbReference>
<dbReference type="GenomeRNAi" id="38454"/>
<dbReference type="PRO" id="PR:Q9VZL6"/>
<dbReference type="Proteomes" id="UP000000803">
    <property type="component" value="Chromosome 3L"/>
</dbReference>
<dbReference type="Bgee" id="FBgn0035469">
    <property type="expression patterns" value="Expressed in saliva-secreting gland and 141 other cell types or tissues"/>
</dbReference>
<dbReference type="ExpressionAtlas" id="Q9VZL6">
    <property type="expression patterns" value="baseline and differential"/>
</dbReference>
<dbReference type="GO" id="GO:0005764">
    <property type="term" value="C:lysosome"/>
    <property type="evidence" value="ECO:0000250"/>
    <property type="project" value="UniProtKB"/>
</dbReference>
<dbReference type="GO" id="GO:0071986">
    <property type="term" value="C:Ragulator complex"/>
    <property type="evidence" value="ECO:0000250"/>
    <property type="project" value="UniProtKB"/>
</dbReference>
<dbReference type="GO" id="GO:0071230">
    <property type="term" value="P:cellular response to amino acid stimulus"/>
    <property type="evidence" value="ECO:0000315"/>
    <property type="project" value="UniProtKB"/>
</dbReference>
<dbReference type="GO" id="GO:0032008">
    <property type="term" value="P:positive regulation of TOR signaling"/>
    <property type="evidence" value="ECO:0000315"/>
    <property type="project" value="UniProtKB"/>
</dbReference>
<dbReference type="GO" id="GO:1904263">
    <property type="term" value="P:positive regulation of TORC1 signaling"/>
    <property type="evidence" value="ECO:0000315"/>
    <property type="project" value="FlyBase"/>
</dbReference>
<dbReference type="GO" id="GO:0061462">
    <property type="term" value="P:protein localization to lysosome"/>
    <property type="evidence" value="ECO:0000250"/>
    <property type="project" value="UniProtKB"/>
</dbReference>
<dbReference type="GO" id="GO:0008361">
    <property type="term" value="P:regulation of cell size"/>
    <property type="evidence" value="ECO:0000250"/>
    <property type="project" value="UniProtKB"/>
</dbReference>
<dbReference type="InterPro" id="IPR034601">
    <property type="entry name" value="LAMTOR4"/>
</dbReference>
<dbReference type="PANTHER" id="PTHR33967">
    <property type="entry name" value="RAGULATOR COMPLEX PROTEIN LAMTOR4"/>
    <property type="match status" value="1"/>
</dbReference>
<dbReference type="PANTHER" id="PTHR33967:SF1">
    <property type="entry name" value="RAGULATOR COMPLEX PROTEIN LAMTOR4"/>
    <property type="match status" value="1"/>
</dbReference>
<accession>Q9VZL6</accession>
<accession>B3DML9</accession>
<accession>Q8SXW8</accession>
<keyword id="KW-0458">Lysosome</keyword>
<keyword id="KW-1185">Reference proteome</keyword>
<protein>
    <recommendedName>
        <fullName evidence="5">Ragulator complex protein LAMTOR4 homolog</fullName>
    </recommendedName>
    <alternativeName>
        <fullName evidence="5">Late endosomal/lysosomal adaptor and MAPK and MTOR activator 4</fullName>
    </alternativeName>
</protein>
<proteinExistence type="evidence at protein level"/>
<sequence>MLKMDREKLIVPNQIGYLILKEDGAVLESGGDLKNDERSANVIMGLLNLTETIDESFMPSSSCERITIDYEHHYYSICMSNRRIYIIKISKSQNGVTTTTSSSSSNSVYNDASDSGAVLA</sequence>
<comment type="function">
    <text evidence="4">Regulator of the TOR pathway, a signaling cascade that promotes cell growth in response to growth factors, energy levels, and amino acids. As part of the Ragulator complex, may activate the TOR signaling cascade in response to amino acids.</text>
</comment>
<comment type="subunit">
    <text evidence="2">Part of the Ragulator complex composed of Lamtor3, Lamtor2, CG14184, CG14812, and Lamtor4.</text>
</comment>
<comment type="interaction">
    <interactant intactId="EBI-179163">
        <id>Q9VZL6</id>
    </interactant>
    <interactant intactId="EBI-165902">
        <id>Q9VW73</id>
        <label>Lamtor1</label>
    </interactant>
    <organismsDiffer>false</organismsDiffer>
    <experiments>2</experiments>
</comment>
<comment type="interaction">
    <interactant intactId="EBI-179163">
        <id>Q9VZL6</id>
    </interactant>
    <interactant intactId="EBI-175452">
        <id>O96824</id>
        <label>Lamtor5</label>
    </interactant>
    <organismsDiffer>false</organismsDiffer>
    <experiments>3</experiments>
</comment>
<comment type="subcellular location">
    <subcellularLocation>
        <location evidence="1">Lysosome</location>
    </subcellularLocation>
</comment>
<comment type="similarity">
    <text evidence="6">Belongs to the LAMTOR4 family.</text>
</comment>
<organism>
    <name type="scientific">Drosophila melanogaster</name>
    <name type="common">Fruit fly</name>
    <dbReference type="NCBI Taxonomy" id="7227"/>
    <lineage>
        <taxon>Eukaryota</taxon>
        <taxon>Metazoa</taxon>
        <taxon>Ecdysozoa</taxon>
        <taxon>Arthropoda</taxon>
        <taxon>Hexapoda</taxon>
        <taxon>Insecta</taxon>
        <taxon>Pterygota</taxon>
        <taxon>Neoptera</taxon>
        <taxon>Endopterygota</taxon>
        <taxon>Diptera</taxon>
        <taxon>Brachycera</taxon>
        <taxon>Muscomorpha</taxon>
        <taxon>Ephydroidea</taxon>
        <taxon>Drosophilidae</taxon>
        <taxon>Drosophila</taxon>
        <taxon>Sophophora</taxon>
    </lineage>
</organism>
<feature type="chain" id="PRO_0000325846" description="Ragulator complex protein LAMTOR4 homolog">
    <location>
        <begin position="1"/>
        <end position="120"/>
    </location>
</feature>
<feature type="region of interest" description="Disordered" evidence="3">
    <location>
        <begin position="93"/>
        <end position="120"/>
    </location>
</feature>
<feature type="compositionally biased region" description="Low complexity" evidence="3">
    <location>
        <begin position="97"/>
        <end position="107"/>
    </location>
</feature>
<feature type="sequence conflict" description="In Ref. 3; AAL68349." evidence="6" ref="3">
    <original>I</original>
    <variation>V</variation>
    <location>
        <position position="19"/>
    </location>
</feature>
<evidence type="ECO:0000250" key="1"/>
<evidence type="ECO:0000250" key="2">
    <source>
        <dbReference type="UniProtKB" id="Q6IAA8"/>
    </source>
</evidence>
<evidence type="ECO:0000256" key="3">
    <source>
        <dbReference type="SAM" id="MobiDB-lite"/>
    </source>
</evidence>
<evidence type="ECO:0000269" key="4">
    <source>
    </source>
</evidence>
<evidence type="ECO:0000303" key="5">
    <source>
    </source>
</evidence>
<evidence type="ECO:0000305" key="6"/>
<evidence type="ECO:0000312" key="7">
    <source>
        <dbReference type="FlyBase" id="FBgn0035469"/>
    </source>
</evidence>